<name>STING_CHICK</name>
<reference key="1">
    <citation type="journal article" date="2004" name="Nature">
        <title>Sequence and comparative analysis of the chicken genome provide unique perspectives on vertebrate evolution.</title>
        <authorList>
            <person name="Hillier L.W."/>
            <person name="Miller W."/>
            <person name="Birney E."/>
            <person name="Warren W."/>
            <person name="Hardison R.C."/>
            <person name="Ponting C.P."/>
            <person name="Bork P."/>
            <person name="Burt D.W."/>
            <person name="Groenen M.A.M."/>
            <person name="Delany M.E."/>
            <person name="Dodgson J.B."/>
            <person name="Chinwalla A.T."/>
            <person name="Cliften P.F."/>
            <person name="Clifton S.W."/>
            <person name="Delehaunty K.D."/>
            <person name="Fronick C."/>
            <person name="Fulton R.S."/>
            <person name="Graves T.A."/>
            <person name="Kremitzki C."/>
            <person name="Layman D."/>
            <person name="Magrini V."/>
            <person name="McPherson J.D."/>
            <person name="Miner T.L."/>
            <person name="Minx P."/>
            <person name="Nash W.E."/>
            <person name="Nhan M.N."/>
            <person name="Nelson J.O."/>
            <person name="Oddy L.G."/>
            <person name="Pohl C.S."/>
            <person name="Randall-Maher J."/>
            <person name="Smith S.M."/>
            <person name="Wallis J.W."/>
            <person name="Yang S.-P."/>
            <person name="Romanov M.N."/>
            <person name="Rondelli C.M."/>
            <person name="Paton B."/>
            <person name="Smith J."/>
            <person name="Morrice D."/>
            <person name="Daniels L."/>
            <person name="Tempest H.G."/>
            <person name="Robertson L."/>
            <person name="Masabanda J.S."/>
            <person name="Griffin D.K."/>
            <person name="Vignal A."/>
            <person name="Fillon V."/>
            <person name="Jacobbson L."/>
            <person name="Kerje S."/>
            <person name="Andersson L."/>
            <person name="Crooijmans R.P."/>
            <person name="Aerts J."/>
            <person name="van der Poel J.J."/>
            <person name="Ellegren H."/>
            <person name="Caldwell R.B."/>
            <person name="Hubbard S.J."/>
            <person name="Grafham D.V."/>
            <person name="Kierzek A.M."/>
            <person name="McLaren S.R."/>
            <person name="Overton I.M."/>
            <person name="Arakawa H."/>
            <person name="Beattie K.J."/>
            <person name="Bezzubov Y."/>
            <person name="Boardman P.E."/>
            <person name="Bonfield J.K."/>
            <person name="Croning M.D.R."/>
            <person name="Davies R.M."/>
            <person name="Francis M.D."/>
            <person name="Humphray S.J."/>
            <person name="Scott C.E."/>
            <person name="Taylor R.G."/>
            <person name="Tickle C."/>
            <person name="Brown W.R.A."/>
            <person name="Rogers J."/>
            <person name="Buerstedde J.-M."/>
            <person name="Wilson S.A."/>
            <person name="Stubbs L."/>
            <person name="Ovcharenko I."/>
            <person name="Gordon L."/>
            <person name="Lucas S."/>
            <person name="Miller M.M."/>
            <person name="Inoko H."/>
            <person name="Shiina T."/>
            <person name="Kaufman J."/>
            <person name="Salomonsen J."/>
            <person name="Skjoedt K."/>
            <person name="Wong G.K.-S."/>
            <person name="Wang J."/>
            <person name="Liu B."/>
            <person name="Wang J."/>
            <person name="Yu J."/>
            <person name="Yang H."/>
            <person name="Nefedov M."/>
            <person name="Koriabine M."/>
            <person name="Dejong P.J."/>
            <person name="Goodstadt L."/>
            <person name="Webber C."/>
            <person name="Dickens N.J."/>
            <person name="Letunic I."/>
            <person name="Suyama M."/>
            <person name="Torrents D."/>
            <person name="von Mering C."/>
            <person name="Zdobnov E.M."/>
            <person name="Makova K."/>
            <person name="Nekrutenko A."/>
            <person name="Elnitski L."/>
            <person name="Eswara P."/>
            <person name="King D.C."/>
            <person name="Yang S.-P."/>
            <person name="Tyekucheva S."/>
            <person name="Radakrishnan A."/>
            <person name="Harris R.S."/>
            <person name="Chiaromonte F."/>
            <person name="Taylor J."/>
            <person name="He J."/>
            <person name="Rijnkels M."/>
            <person name="Griffiths-Jones S."/>
            <person name="Ureta-Vidal A."/>
            <person name="Hoffman M.M."/>
            <person name="Severin J."/>
            <person name="Searle S.M.J."/>
            <person name="Law A.S."/>
            <person name="Speed D."/>
            <person name="Waddington D."/>
            <person name="Cheng Z."/>
            <person name="Tuzun E."/>
            <person name="Eichler E."/>
            <person name="Bao Z."/>
            <person name="Flicek P."/>
            <person name="Shteynberg D.D."/>
            <person name="Brent M.R."/>
            <person name="Bye J.M."/>
            <person name="Huckle E.J."/>
            <person name="Chatterji S."/>
            <person name="Dewey C."/>
            <person name="Pachter L."/>
            <person name="Kouranov A."/>
            <person name="Mourelatos Z."/>
            <person name="Hatzigeorgiou A.G."/>
            <person name="Paterson A.H."/>
            <person name="Ivarie R."/>
            <person name="Brandstrom M."/>
            <person name="Axelsson E."/>
            <person name="Backstrom N."/>
            <person name="Berlin S."/>
            <person name="Webster M.T."/>
            <person name="Pourquie O."/>
            <person name="Reymond A."/>
            <person name="Ucla C."/>
            <person name="Antonarakis S.E."/>
            <person name="Long M."/>
            <person name="Emerson J.J."/>
            <person name="Betran E."/>
            <person name="Dupanloup I."/>
            <person name="Kaessmann H."/>
            <person name="Hinrichs A.S."/>
            <person name="Bejerano G."/>
            <person name="Furey T.S."/>
            <person name="Harte R.A."/>
            <person name="Raney B."/>
            <person name="Siepel A."/>
            <person name="Kent W.J."/>
            <person name="Haussler D."/>
            <person name="Eyras E."/>
            <person name="Castelo R."/>
            <person name="Abril J.F."/>
            <person name="Castellano S."/>
            <person name="Camara F."/>
            <person name="Parra G."/>
            <person name="Guigo R."/>
            <person name="Bourque G."/>
            <person name="Tesler G."/>
            <person name="Pevzner P.A."/>
            <person name="Smit A."/>
            <person name="Fulton L.A."/>
            <person name="Mardis E.R."/>
            <person name="Wilson R.K."/>
        </authorList>
    </citation>
    <scope>NUCLEOTIDE SEQUENCE [LARGE SCALE GENOMIC DNA]</scope>
</reference>
<reference key="2">
    <citation type="journal article" date="2019" name="Nature">
        <title>Cryo-EM structures of STING reveal its mechanism of activation by cyclic GMP-AMP.</title>
        <authorList>
            <person name="Shang G."/>
            <person name="Zhang C."/>
            <person name="Chen Z.J."/>
            <person name="Bai X.C."/>
            <person name="Zhang X."/>
        </authorList>
    </citation>
    <scope>STRUCTURE BY ELECTRON MICROSCOPY (4.0 ANGSTROMS) OF 1-379 IN COMPLEX WITH CGAMP</scope>
    <scope>DOMAIN</scope>
</reference>
<reference key="3">
    <citation type="journal article" date="2019" name="Nature">
        <title>Structural basis of STING binding with and phosphorylation by TBK1.</title>
        <authorList>
            <person name="Zhang C."/>
            <person name="Shang G."/>
            <person name="Gui X."/>
            <person name="Zhang X."/>
            <person name="Bai X.C."/>
            <person name="Chen Z.J."/>
        </authorList>
    </citation>
    <scope>STRUCTURE BY ELECTRON MICROSCOPY (3.3 ANGSTROMS) OF 1-379 IN COMPLEX WITH CGAMP AND TBK1</scope>
    <scope>PHOSPHORYLATION AT SER-366</scope>
</reference>
<evidence type="ECO:0000250" key="1">
    <source>
        <dbReference type="UniProtKB" id="Q86WV6"/>
    </source>
</evidence>
<evidence type="ECO:0000255" key="2"/>
<evidence type="ECO:0000269" key="3">
    <source>
    </source>
</evidence>
<evidence type="ECO:0000303" key="4">
    <source>
    </source>
</evidence>
<evidence type="ECO:0000305" key="5"/>
<evidence type="ECO:0000305" key="6">
    <source>
    </source>
</evidence>
<evidence type="ECO:0007744" key="7">
    <source>
        <dbReference type="PDB" id="6NT7"/>
    </source>
</evidence>
<evidence type="ECO:0007829" key="8">
    <source>
        <dbReference type="PDB" id="8IK0"/>
    </source>
</evidence>
<proteinExistence type="evidence at protein level"/>
<organism>
    <name type="scientific">Gallus gallus</name>
    <name type="common">Chicken</name>
    <dbReference type="NCBI Taxonomy" id="9031"/>
    <lineage>
        <taxon>Eukaryota</taxon>
        <taxon>Metazoa</taxon>
        <taxon>Chordata</taxon>
        <taxon>Craniata</taxon>
        <taxon>Vertebrata</taxon>
        <taxon>Euteleostomi</taxon>
        <taxon>Archelosauria</taxon>
        <taxon>Archosauria</taxon>
        <taxon>Dinosauria</taxon>
        <taxon>Saurischia</taxon>
        <taxon>Theropoda</taxon>
        <taxon>Coelurosauria</taxon>
        <taxon>Aves</taxon>
        <taxon>Neognathae</taxon>
        <taxon>Galloanserae</taxon>
        <taxon>Galliformes</taxon>
        <taxon>Phasianidae</taxon>
        <taxon>Phasianinae</taxon>
        <taxon>Gallus</taxon>
    </lineage>
</organism>
<keyword id="KW-0002">3D-structure</keyword>
<keyword id="KW-0072">Autophagy</keyword>
<keyword id="KW-0963">Cytoplasm</keyword>
<keyword id="KW-0968">Cytoplasmic vesicle</keyword>
<keyword id="KW-0256">Endoplasmic reticulum</keyword>
<keyword id="KW-0333">Golgi apparatus</keyword>
<keyword id="KW-0391">Immunity</keyword>
<keyword id="KW-0399">Innate immunity</keyword>
<keyword id="KW-0407">Ion channel</keyword>
<keyword id="KW-0406">Ion transport</keyword>
<keyword id="KW-0472">Membrane</keyword>
<keyword id="KW-0547">Nucleotide-binding</keyword>
<keyword id="KW-0597">Phosphoprotein</keyword>
<keyword id="KW-1185">Reference proteome</keyword>
<keyword id="KW-0812">Transmembrane</keyword>
<keyword id="KW-1133">Transmembrane helix</keyword>
<keyword id="KW-0813">Transport</keyword>
<accession>E1C7U0</accession>
<accession>A0A1D5P7Q9</accession>
<sequence length="379" mass="42596">MPQDPSTRSSPARLLIPEPRAGRARHAACVLLAVCFVVLFLSGEPLAPIIRSVCTQLAALQLGVLLKGCCCLAEEIFHLHSRHHGSLWQVLCSCFPPRWYLALLLVGGSAYLDPPEDNGHSPRLALTLSCLCQLLVLALGLQKLSAVEVSELTESSKKNVAHGLAWSYYIGYLKVVLPRLKECMEELSRTNPMLRAHRDTWKLHILVPLGCDIWDDLEKADSNIQYLADLPETILTRAGIKRRVYKHSLYVIRDKDNKLRPCVLEFASPLQTLCAMSQDDCAAFSREQRLEQARLFYRSLRDILGSSKECAGLYRLIAYEEPAEPESHFLSGLILWHLQQQQREEYMVQEELPLGTSSVELSLQVSSSDLPQPLRSDCP</sequence>
<comment type="function">
    <text evidence="1 3">Facilitator of innate immune signaling that acts as a sensor of cytosolic DNA from bacteria and viruses and promotes the production of type I interferon (IFN-alpha and IFN-beta) (By similarity). Innate immune response is triggered in response to non-CpG double-stranded DNA from viruses and bacteria delivered to the cytoplasm (By similarity). Acts by binding cyclic dinucleotides: recognizes and binds cyclic di-GMP (c-di-GMP), a second messenger produced by bacteria, and cyclic GMP-AMP (cGAMP), a messenger produced by CGAS in response to DNA virus in the cytosol (PubMed:30842659). Upon binding of c-di-GMP or cGAMP, STING1 oligomerizes and is able to activate both NF-kappa-B and IRF3 transcription pathways to induce expression of type I interferon and exert a potent anti-viral state (PubMed:30842659). Exhibits 2',3' phosphodiester linkage-specific ligand recognition: can bind both 2'-3' linked cGAMP and 3'-3' linked cGAMP but is preferentially activated by 2'-3' linked cGAMP (By similarity). In addition to promote the production of type I interferons, plays a direct role in autophagy (By similarity). Following cGAMP-binding, STING1 buds from the endoplasmic reticulum into COPII vesicles, which then form the endoplasmic reticulum-Golgi intermediate compartment (ERGIC) (By similarity). The ERGIC serves as the membrane source for LC3 lipidation, leading to formation of autophagosomes that target cytosolic DNA or DNA viruses for degradation by the lysosome (By similarity). Promotes autophagy by acting as a proton channel that directs proton efflux from the Golgi to facilitate LC3 lipidation (By similarity). The autophagy- and interferon-inducing activities can be uncoupled and autophagy induction is independent of TBK1 phosphorylation (By similarity).</text>
</comment>
<comment type="catalytic activity">
    <reaction evidence="1">
        <text>H(+)(in) = H(+)(out)</text>
        <dbReference type="Rhea" id="RHEA:34979"/>
        <dbReference type="ChEBI" id="CHEBI:15378"/>
    </reaction>
</comment>
<comment type="subunit">
    <text evidence="1 3">Homodimer; forms a homodimer in absence of cyclic nucleotide (c-di-GMP or cGAMP) (PubMed:30842659). Homotetramer; in presence of cyclic nucleotide (c-di-GMP or cGAMP), forms tetramers and higher-order oligomers through side-by-side packing (PubMed:30842659). Interacts (when phosphorylated) with IRF3; following activation and phosphorylation on the pLxIS motif by TBK1, recruits IRF3 (By similarity).</text>
</comment>
<comment type="subcellular location">
    <subcellularLocation>
        <location evidence="1">Endoplasmic reticulum membrane</location>
        <topology evidence="2">Multi-pass membrane protein</topology>
    </subcellularLocation>
    <subcellularLocation>
        <location evidence="1">Cytoplasm</location>
        <location evidence="1">Perinuclear region</location>
    </subcellularLocation>
    <subcellularLocation>
        <location evidence="1">Endoplasmic reticulum-Golgi intermediate compartment membrane</location>
        <topology evidence="2">Multi-pass membrane protein</topology>
    </subcellularLocation>
    <subcellularLocation>
        <location evidence="1">Golgi apparatus membrane</location>
        <topology evidence="2">Multi-pass membrane protein</topology>
    </subcellularLocation>
    <subcellularLocation>
        <location evidence="1">Cytoplasmic vesicle</location>
        <location evidence="1">Autophagosome membrane</location>
        <topology evidence="2">Multi-pass membrane protein</topology>
    </subcellularLocation>
    <text evidence="1">In response to double-stranded DNA stimulation, translocates from the endoplasmic reticulum through the endoplasmic reticulum-Golgi intermediate compartment and Golgi to post-Golgi vesicles, where the kinase TBK1 is recruited. Upon cGAMP-binding, translocates to the endoplasmic reticulum-Golgi intermediate compartment (ERGIC) in a process that is dependent on COPII vesicles; STING1-containing ERGIC serves as a membrane source for LC3 lipidation, which is a key step in autophagosome biogenesis.</text>
</comment>
<comment type="domain">
    <text evidence="1 3">In absence of cGAMP, the transmembrane and cytoplasmic regions interact to form an integrated, domain-swapped dimeric assembly (PubMed:30842659). In absence of cyclic nucleotide (c-di-GMP or cGAMP), the protein is autoinhibited by an intramolecular interaction between the cyclic dinucleotide-binding domain (CBD) and the C-terminal tail (CTT) (By similarity). Following cGAMP-binding, the cyclic dinucleotide-binding domain (CBD) is closed, leading to a 180 degrees rotation of the CBD domain relative to the transmembrane domain (PubMed:30842659). This rotation is coupled to a conformational change in a loop on the side of the CBD dimer, which leads to the formation of the STING1 tetramer and higher-order oligomers through side-by-side packing (PubMed:30842659). The N-terminal part of the CBD region was initially though to contain a fifth transmembrane region (TM5) but is part of the folded, soluble CBD (By similarity).</text>
</comment>
<comment type="domain">
    <text evidence="1">The pLxIS motif constitutes an IRF3-binding motif: following phosphorylation by TBK1, the phosphorylated pLxIS motif of STING1 recruits IRF3. IRF3 is then phosphorylated and activated by TBK1 to induce type-I interferons and other cytokines.</text>
</comment>
<comment type="domain">
    <text evidence="1">The N-terminal domain interacts with glycerophospholipids and phospholipids.</text>
</comment>
<comment type="PTM">
    <text evidence="6">Phosphorylation by TBK1 leads to activation and production of IFN-beta (Probable). Following cyclic nucleotide (c-di-GMP or cGAMP)-binding, activation and translocation from the endoplasmic reticulum, STING1 is phosphorylated by TBK1 at Ser-366 in the pLxIS motif (Probable). The phosphorylated pLxIS motif constitutes an IRF3-binding motif, leading to recruitment of the transcription factor IRF3 to induce type-I interferons and other cytokines (Probable).</text>
</comment>
<comment type="similarity">
    <text evidence="5">Belongs to the STING family.</text>
</comment>
<dbReference type="EMBL" id="AADN02063745">
    <property type="status" value="NOT_ANNOTATED_CDS"/>
    <property type="molecule type" value="Genomic_DNA"/>
</dbReference>
<dbReference type="EMBL" id="AADN02063746">
    <property type="status" value="NOT_ANNOTATED_CDS"/>
    <property type="molecule type" value="Genomic_DNA"/>
</dbReference>
<dbReference type="EMBL" id="AADN04000430">
    <property type="status" value="NOT_ANNOTATED_CDS"/>
    <property type="molecule type" value="Genomic_DNA"/>
</dbReference>
<dbReference type="RefSeq" id="XP_001232171.2">
    <property type="nucleotide sequence ID" value="XM_001232170.4"/>
</dbReference>
<dbReference type="RefSeq" id="XP_015149009.1">
    <property type="nucleotide sequence ID" value="XM_015293523.1"/>
</dbReference>
<dbReference type="RefSeq" id="XP_015149010.1">
    <property type="nucleotide sequence ID" value="XM_015293524.1"/>
</dbReference>
<dbReference type="RefSeq" id="XP_015149011.1">
    <property type="nucleotide sequence ID" value="XM_015293525.1"/>
</dbReference>
<dbReference type="RefSeq" id="XP_015149012.1">
    <property type="nucleotide sequence ID" value="XM_015293526.1"/>
</dbReference>
<dbReference type="RefSeq" id="XP_015149013.1">
    <property type="nucleotide sequence ID" value="XM_015293527.1"/>
</dbReference>
<dbReference type="RefSeq" id="XP_015149014.1">
    <property type="nucleotide sequence ID" value="XM_015293528.1"/>
</dbReference>
<dbReference type="RefSeq" id="XP_015149015.1">
    <property type="nucleotide sequence ID" value="XM_015293529.1"/>
</dbReference>
<dbReference type="RefSeq" id="XP_015149016.1">
    <property type="nucleotide sequence ID" value="XM_015293530.1"/>
</dbReference>
<dbReference type="PDB" id="6NT6">
    <property type="method" value="EM"/>
    <property type="resolution" value="4.00 A"/>
    <property type="chains" value="A/B=1-379"/>
</dbReference>
<dbReference type="PDB" id="6NT7">
    <property type="method" value="EM"/>
    <property type="resolution" value="4.00 A"/>
    <property type="chains" value="A/B=1-379"/>
</dbReference>
<dbReference type="PDB" id="6NT8">
    <property type="method" value="EM"/>
    <property type="resolution" value="6.50 A"/>
    <property type="chains" value="A/B/D/E=1-379"/>
</dbReference>
<dbReference type="PDB" id="6NT9">
    <property type="method" value="EM"/>
    <property type="resolution" value="3.30 A"/>
    <property type="chains" value="C/D=1-379"/>
</dbReference>
<dbReference type="PDB" id="8IK0">
    <property type="method" value="EM"/>
    <property type="resolution" value="3.30 A"/>
    <property type="chains" value="A/B/C/D/E/F/G/H=1-342"/>
</dbReference>
<dbReference type="PDBsum" id="6NT6"/>
<dbReference type="PDBsum" id="6NT7"/>
<dbReference type="PDBsum" id="6NT8"/>
<dbReference type="PDBsum" id="6NT9"/>
<dbReference type="PDBsum" id="8IK0"/>
<dbReference type="EMDB" id="EMD-0503"/>
<dbReference type="EMDB" id="EMD-0504"/>
<dbReference type="EMDB" id="EMD-0505"/>
<dbReference type="EMDB" id="EMD-0506"/>
<dbReference type="SMR" id="E1C7U0"/>
<dbReference type="FunCoup" id="E1C7U0">
    <property type="interactions" value="134"/>
</dbReference>
<dbReference type="STRING" id="9031.ENSGALP00000048751"/>
<dbReference type="iPTMnet" id="E1C7U0"/>
<dbReference type="PaxDb" id="9031-ENSGALP00000001248"/>
<dbReference type="GeneID" id="768990"/>
<dbReference type="CTD" id="768990"/>
<dbReference type="VEuPathDB" id="HostDB:geneid_768990"/>
<dbReference type="eggNOG" id="ENOG502R15M">
    <property type="taxonomic scope" value="Eukaryota"/>
</dbReference>
<dbReference type="InParanoid" id="E1C7U0"/>
<dbReference type="OrthoDB" id="6053839at2759"/>
<dbReference type="PhylomeDB" id="E1C7U0"/>
<dbReference type="TreeFam" id="TF324444"/>
<dbReference type="Reactome" id="R-GGA-1834941">
    <property type="pathway name" value="STING mediated induction of host immune responses"/>
</dbReference>
<dbReference type="Reactome" id="R-GGA-6798695">
    <property type="pathway name" value="Neutrophil degranulation"/>
</dbReference>
<dbReference type="PRO" id="PR:E1C7U0"/>
<dbReference type="Proteomes" id="UP000000539">
    <property type="component" value="Chromosome 13"/>
</dbReference>
<dbReference type="Bgee" id="ENSGALG00000041129">
    <property type="expression patterns" value="Expressed in ovary and 13 other cell types or tissues"/>
</dbReference>
<dbReference type="GO" id="GO:0005776">
    <property type="term" value="C:autophagosome"/>
    <property type="evidence" value="ECO:0000318"/>
    <property type="project" value="GO_Central"/>
</dbReference>
<dbReference type="GO" id="GO:0000421">
    <property type="term" value="C:autophagosome membrane"/>
    <property type="evidence" value="ECO:0007669"/>
    <property type="project" value="UniProtKB-SubCell"/>
</dbReference>
<dbReference type="GO" id="GO:0005737">
    <property type="term" value="C:cytoplasm"/>
    <property type="evidence" value="ECO:0000250"/>
    <property type="project" value="UniProtKB"/>
</dbReference>
<dbReference type="GO" id="GO:0031410">
    <property type="term" value="C:cytoplasmic vesicle"/>
    <property type="evidence" value="ECO:0007669"/>
    <property type="project" value="UniProtKB-KW"/>
</dbReference>
<dbReference type="GO" id="GO:0005789">
    <property type="term" value="C:endoplasmic reticulum membrane"/>
    <property type="evidence" value="ECO:0000250"/>
    <property type="project" value="UniProtKB"/>
</dbReference>
<dbReference type="GO" id="GO:0033116">
    <property type="term" value="C:endoplasmic reticulum-Golgi intermediate compartment membrane"/>
    <property type="evidence" value="ECO:0007669"/>
    <property type="project" value="UniProtKB-SubCell"/>
</dbReference>
<dbReference type="GO" id="GO:0000139">
    <property type="term" value="C:Golgi membrane"/>
    <property type="evidence" value="ECO:0007669"/>
    <property type="project" value="UniProtKB-SubCell"/>
</dbReference>
<dbReference type="GO" id="GO:0048471">
    <property type="term" value="C:perinuclear region of cytoplasm"/>
    <property type="evidence" value="ECO:0000250"/>
    <property type="project" value="UniProtKB"/>
</dbReference>
<dbReference type="GO" id="GO:0061507">
    <property type="term" value="F:2',3'-cyclic GMP-AMP binding"/>
    <property type="evidence" value="ECO:0000314"/>
    <property type="project" value="UniProtKB"/>
</dbReference>
<dbReference type="GO" id="GO:0035438">
    <property type="term" value="F:cyclic-di-GMP binding"/>
    <property type="evidence" value="ECO:0000250"/>
    <property type="project" value="UniProtKB"/>
</dbReference>
<dbReference type="GO" id="GO:0042803">
    <property type="term" value="F:protein homodimerization activity"/>
    <property type="evidence" value="ECO:0000314"/>
    <property type="project" value="UniProtKB"/>
</dbReference>
<dbReference type="GO" id="GO:0015252">
    <property type="term" value="F:proton channel activity"/>
    <property type="evidence" value="ECO:0000250"/>
    <property type="project" value="UniProtKB"/>
</dbReference>
<dbReference type="GO" id="GO:0002218">
    <property type="term" value="P:activation of innate immune response"/>
    <property type="evidence" value="ECO:0000250"/>
    <property type="project" value="UniProtKB"/>
</dbReference>
<dbReference type="GO" id="GO:0000045">
    <property type="term" value="P:autophagosome assembly"/>
    <property type="evidence" value="ECO:0000250"/>
    <property type="project" value="UniProtKB"/>
</dbReference>
<dbReference type="GO" id="GO:0140896">
    <property type="term" value="P:cGAS/STING signaling pathway"/>
    <property type="evidence" value="ECO:0000250"/>
    <property type="project" value="UniProtKB"/>
</dbReference>
<dbReference type="GO" id="GO:0051607">
    <property type="term" value="P:defense response to virus"/>
    <property type="evidence" value="ECO:0000250"/>
    <property type="project" value="UniProtKB"/>
</dbReference>
<dbReference type="GO" id="GO:0045087">
    <property type="term" value="P:innate immune response"/>
    <property type="evidence" value="ECO:0000250"/>
    <property type="project" value="UniProtKB"/>
</dbReference>
<dbReference type="GO" id="GO:0032728">
    <property type="term" value="P:positive regulation of interferon-beta production"/>
    <property type="evidence" value="ECO:0000250"/>
    <property type="project" value="UniProtKB"/>
</dbReference>
<dbReference type="GO" id="GO:0016239">
    <property type="term" value="P:positive regulation of macroautophagy"/>
    <property type="evidence" value="ECO:0000250"/>
    <property type="project" value="UniProtKB"/>
</dbReference>
<dbReference type="GO" id="GO:0032481">
    <property type="term" value="P:positive regulation of type I interferon production"/>
    <property type="evidence" value="ECO:0000250"/>
    <property type="project" value="UniProtKB"/>
</dbReference>
<dbReference type="GO" id="GO:0051259">
    <property type="term" value="P:protein complex oligomerization"/>
    <property type="evidence" value="ECO:0000314"/>
    <property type="project" value="UniProtKB"/>
</dbReference>
<dbReference type="GO" id="GO:0061709">
    <property type="term" value="P:reticulophagy"/>
    <property type="evidence" value="ECO:0000250"/>
    <property type="project" value="UniProtKB"/>
</dbReference>
<dbReference type="CDD" id="cd22658">
    <property type="entry name" value="STING_C_metazoan-like"/>
    <property type="match status" value="1"/>
</dbReference>
<dbReference type="FunFam" id="1.20.5.5200:FF:000001">
    <property type="entry name" value="Stimulator of interferon genes protein"/>
    <property type="match status" value="1"/>
</dbReference>
<dbReference type="FunFam" id="3.40.50.12100:FF:000001">
    <property type="entry name" value="Stimulator of interferon genes protein"/>
    <property type="match status" value="1"/>
</dbReference>
<dbReference type="Gene3D" id="1.20.5.5200">
    <property type="match status" value="1"/>
</dbReference>
<dbReference type="Gene3D" id="3.40.50.12100">
    <property type="entry name" value="Stimulator of interferon genes protein"/>
    <property type="match status" value="1"/>
</dbReference>
<dbReference type="InterPro" id="IPR029158">
    <property type="entry name" value="STING"/>
</dbReference>
<dbReference type="InterPro" id="IPR047191">
    <property type="entry name" value="STING_C_chordates"/>
</dbReference>
<dbReference type="InterPro" id="IPR038623">
    <property type="entry name" value="STING_C_sf"/>
</dbReference>
<dbReference type="InterPro" id="IPR055432">
    <property type="entry name" value="STING_LBD"/>
</dbReference>
<dbReference type="InterPro" id="IPR055434">
    <property type="entry name" value="STING_TM"/>
</dbReference>
<dbReference type="PANTHER" id="PTHR34339">
    <property type="entry name" value="STIMULATOR OF INTERFERON GENES PROTEIN"/>
    <property type="match status" value="1"/>
</dbReference>
<dbReference type="PANTHER" id="PTHR34339:SF1">
    <property type="entry name" value="STIMULATOR OF INTERFERON GENES PROTEIN"/>
    <property type="match status" value="1"/>
</dbReference>
<dbReference type="Pfam" id="PF15009">
    <property type="entry name" value="STING_LBD"/>
    <property type="match status" value="1"/>
</dbReference>
<dbReference type="Pfam" id="PF23417">
    <property type="entry name" value="STING_TM"/>
    <property type="match status" value="1"/>
</dbReference>
<protein>
    <recommendedName>
        <fullName evidence="4">Stimulator of interferon genes protein</fullName>
        <shortName evidence="4">STING</shortName>
    </recommendedName>
    <alternativeName>
        <fullName evidence="1">Transmembrane protein 173</fullName>
    </alternativeName>
</protein>
<feature type="chain" id="PRO_0000404588" description="Stimulator of interferon genes protein">
    <location>
        <begin position="1"/>
        <end position="379"/>
    </location>
</feature>
<feature type="topological domain" description="Cytoplasmic" evidence="3">
    <location>
        <begin position="1"/>
        <end position="23"/>
    </location>
</feature>
<feature type="transmembrane region" description="Helical; Name=1" evidence="3">
    <location>
        <begin position="24"/>
        <end position="40"/>
    </location>
</feature>
<feature type="topological domain" description="Lumenal" evidence="3">
    <location>
        <begin position="41"/>
        <end position="50"/>
    </location>
</feature>
<feature type="transmembrane region" description="Helical; Name=2" evidence="3">
    <location>
        <begin position="51"/>
        <end position="75"/>
    </location>
</feature>
<feature type="topological domain" description="Cytoplasmic" evidence="3">
    <location>
        <begin position="76"/>
        <end position="97"/>
    </location>
</feature>
<feature type="transmembrane region" description="Helical; Name=3" evidence="3">
    <location>
        <begin position="98"/>
        <end position="111"/>
    </location>
</feature>
<feature type="topological domain" description="Lumenal" evidence="3">
    <location>
        <begin position="112"/>
        <end position="121"/>
    </location>
</feature>
<feature type="transmembrane region" description="Helical; Name=4" evidence="3">
    <location>
        <begin position="122"/>
        <end position="139"/>
    </location>
</feature>
<feature type="topological domain" description="Cytoplasmic" evidence="3">
    <location>
        <begin position="140"/>
        <end position="379"/>
    </location>
</feature>
<feature type="region of interest" description="Cyclic dinucleotide-binding domain (CBD)" evidence="3">
    <location>
        <begin position="158"/>
        <end position="345"/>
    </location>
</feature>
<feature type="short sequence motif" description="pLxIS motif" evidence="1">
    <location>
        <begin position="363"/>
        <end position="366"/>
    </location>
</feature>
<feature type="binding site" evidence="3 7">
    <location>
        <begin position="167"/>
        <end position="172"/>
    </location>
    <ligand>
        <name>2',3'-cGAMP</name>
        <dbReference type="ChEBI" id="CHEBI:143093"/>
    </ligand>
</feature>
<feature type="binding site" evidence="1">
    <location>
        <position position="167"/>
    </location>
    <ligand>
        <name>3',3'-c-di-GMP</name>
        <dbReference type="ChEBI" id="CHEBI:58805"/>
    </ligand>
</feature>
<feature type="binding site" evidence="1">
    <location>
        <position position="172"/>
    </location>
    <ligand>
        <name>3',3'-c-di-GMP</name>
        <dbReference type="ChEBI" id="CHEBI:58805"/>
    </ligand>
</feature>
<feature type="binding site" evidence="3 7">
    <location>
        <begin position="243"/>
        <end position="246"/>
    </location>
    <ligand>
        <name>2',3'-cGAMP</name>
        <dbReference type="ChEBI" id="CHEBI:143093"/>
    </ligand>
</feature>
<feature type="binding site" evidence="1">
    <location>
        <begin position="243"/>
        <end position="246"/>
    </location>
    <ligand>
        <name>3',3'-c-di-GMP</name>
        <dbReference type="ChEBI" id="CHEBI:58805"/>
    </ligand>
</feature>
<feature type="binding site" evidence="3 7">
    <location>
        <position position="268"/>
    </location>
    <ligand>
        <name>2',3'-cGAMP</name>
        <dbReference type="ChEBI" id="CHEBI:143093"/>
    </ligand>
</feature>
<feature type="binding site" evidence="1">
    <location>
        <position position="268"/>
    </location>
    <ligand>
        <name>3',3'-c-di-GMP</name>
        <dbReference type="ChEBI" id="CHEBI:58805"/>
    </ligand>
</feature>
<feature type="modified residue" description="Phosphoserine; by TBK1" evidence="6">
    <location>
        <position position="366"/>
    </location>
</feature>
<feature type="helix" evidence="8">
    <location>
        <begin position="24"/>
        <end position="40"/>
    </location>
</feature>
<feature type="helix" evidence="8">
    <location>
        <begin position="47"/>
        <end position="59"/>
    </location>
</feature>
<feature type="helix" evidence="8">
    <location>
        <begin position="60"/>
        <end position="62"/>
    </location>
</feature>
<feature type="helix" evidence="8">
    <location>
        <begin position="63"/>
        <end position="75"/>
    </location>
</feature>
<feature type="turn" evidence="8">
    <location>
        <begin position="76"/>
        <end position="78"/>
    </location>
</feature>
<feature type="helix" evidence="8">
    <location>
        <begin position="79"/>
        <end position="82"/>
    </location>
</feature>
<feature type="helix" evidence="8">
    <location>
        <begin position="88"/>
        <end position="93"/>
    </location>
</feature>
<feature type="helix" evidence="8">
    <location>
        <begin position="100"/>
        <end position="112"/>
    </location>
</feature>
<feature type="helix" evidence="8">
    <location>
        <begin position="124"/>
        <end position="139"/>
    </location>
</feature>
<feature type="helix" evidence="8">
    <location>
        <begin position="146"/>
        <end position="155"/>
    </location>
</feature>
<feature type="helix" evidence="8">
    <location>
        <begin position="161"/>
        <end position="176"/>
    </location>
</feature>
<feature type="helix" evidence="8">
    <location>
        <begin position="178"/>
        <end position="180"/>
    </location>
</feature>
<feature type="helix" evidence="8">
    <location>
        <begin position="181"/>
        <end position="190"/>
    </location>
</feature>
<feature type="helix" evidence="8">
    <location>
        <begin position="192"/>
        <end position="196"/>
    </location>
</feature>
<feature type="strand" evidence="8">
    <location>
        <begin position="202"/>
        <end position="210"/>
    </location>
</feature>
<feature type="helix" evidence="8">
    <location>
        <begin position="217"/>
        <end position="220"/>
    </location>
</feature>
<feature type="strand" evidence="8">
    <location>
        <begin position="224"/>
        <end position="229"/>
    </location>
</feature>
<feature type="strand" evidence="8">
    <location>
        <begin position="233"/>
        <end position="237"/>
    </location>
</feature>
<feature type="turn" evidence="8">
    <location>
        <begin position="238"/>
        <end position="240"/>
    </location>
</feature>
<feature type="strand" evidence="8">
    <location>
        <begin position="241"/>
        <end position="246"/>
    </location>
</feature>
<feature type="strand" evidence="8">
    <location>
        <begin position="248"/>
        <end position="253"/>
    </location>
</feature>
<feature type="strand" evidence="8">
    <location>
        <begin position="259"/>
        <end position="266"/>
    </location>
</feature>
<feature type="helix" evidence="8">
    <location>
        <begin position="268"/>
        <end position="277"/>
    </location>
</feature>
<feature type="turn" evidence="8">
    <location>
        <begin position="280"/>
        <end position="282"/>
    </location>
</feature>
<feature type="helix" evidence="8">
    <location>
        <begin position="287"/>
        <end position="304"/>
    </location>
</feature>
<feature type="strand" evidence="8">
    <location>
        <begin position="311"/>
        <end position="319"/>
    </location>
</feature>
<feature type="helix" evidence="8">
    <location>
        <begin position="329"/>
        <end position="341"/>
    </location>
</feature>
<gene>
    <name evidence="1" type="primary">STING1</name>
    <name evidence="4" type="synonym">STING</name>
    <name evidence="1" type="synonym">TMEM173</name>
</gene>